<comment type="function">
    <text evidence="1">Cell wall formation. Catalyzes the transfer of a GlcNAc subunit on undecaprenyl-pyrophosphoryl-MurNAc-pentapeptide (lipid intermediate I) to form undecaprenyl-pyrophosphoryl-MurNAc-(pentapeptide)GlcNAc (lipid intermediate II).</text>
</comment>
<comment type="catalytic activity">
    <reaction evidence="1">
        <text>Mur2Ac(oyl-L-Ala-gamma-D-Glu-L-Lys-D-Ala-D-Ala)-di-trans,octa-cis-undecaprenyl diphosphate + UDP-N-acetyl-alpha-D-glucosamine = beta-D-GlcNAc-(1-&gt;4)-Mur2Ac(oyl-L-Ala-gamma-D-Glu-L-Lys-D-Ala-D-Ala)-di-trans,octa-cis-undecaprenyl diphosphate + UDP + H(+)</text>
        <dbReference type="Rhea" id="RHEA:23192"/>
        <dbReference type="ChEBI" id="CHEBI:15378"/>
        <dbReference type="ChEBI" id="CHEBI:57705"/>
        <dbReference type="ChEBI" id="CHEBI:58223"/>
        <dbReference type="ChEBI" id="CHEBI:60032"/>
        <dbReference type="ChEBI" id="CHEBI:60033"/>
        <dbReference type="EC" id="2.4.1.227"/>
    </reaction>
</comment>
<comment type="pathway">
    <text evidence="1">Cell wall biogenesis; peptidoglycan biosynthesis.</text>
</comment>
<comment type="subcellular location">
    <subcellularLocation>
        <location evidence="1">Cell membrane</location>
        <topology evidence="1">Peripheral membrane protein</topology>
        <orientation evidence="1">Cytoplasmic side</orientation>
    </subcellularLocation>
</comment>
<comment type="similarity">
    <text evidence="1">Belongs to the glycosyltransferase 28 family. MurG subfamily.</text>
</comment>
<organism>
    <name type="scientific">Staphylococcus aureus (strain bovine RF122 / ET3-1)</name>
    <dbReference type="NCBI Taxonomy" id="273036"/>
    <lineage>
        <taxon>Bacteria</taxon>
        <taxon>Bacillati</taxon>
        <taxon>Bacillota</taxon>
        <taxon>Bacilli</taxon>
        <taxon>Bacillales</taxon>
        <taxon>Staphylococcaceae</taxon>
        <taxon>Staphylococcus</taxon>
    </lineage>
</organism>
<proteinExistence type="inferred from homology"/>
<keyword id="KW-0131">Cell cycle</keyword>
<keyword id="KW-0132">Cell division</keyword>
<keyword id="KW-1003">Cell membrane</keyword>
<keyword id="KW-0133">Cell shape</keyword>
<keyword id="KW-0961">Cell wall biogenesis/degradation</keyword>
<keyword id="KW-0328">Glycosyltransferase</keyword>
<keyword id="KW-0472">Membrane</keyword>
<keyword id="KW-0573">Peptidoglycan synthesis</keyword>
<keyword id="KW-0808">Transferase</keyword>
<sequence>MTKIAFTGGGTVGHVSVNLSLIPTALSQGYEALYIGSKNGIEREMIESQLPEIKYYPISSGKLRRYISLENAKDVFKVLKGILDARKVLKKEKPDLLFSKGGFVSVPVVIAAKSLNIPTIIHESDLTPGLANKIALKFAKKIYTTFEETLNYLPKEKADFIGATIREDLKNGNAHSGYQLTGFNENKKVLLVMGGSLGSKKLNSIIRENLDALLQQYQVIHLTGKGLKDNQVKKSGYIQYEFVKEDLTDLLAITDTVISRAGSNAIYEFLTLRIPMLLVPLGLDQSRGDQIDNANHFADKGYAKAIDEEQLTVQILLQELNEMEQERTRIINNMKSYEQSYTKEALFDKMIKDALN</sequence>
<evidence type="ECO:0000255" key="1">
    <source>
        <dbReference type="HAMAP-Rule" id="MF_00033"/>
    </source>
</evidence>
<gene>
    <name evidence="1" type="primary">murG</name>
    <name type="ordered locus">SAB1273c</name>
</gene>
<feature type="chain" id="PRO_0000315172" description="UDP-N-acetylglucosamine--N-acetylmuramyl-(pentapeptide) pyrophosphoryl-undecaprenol N-acetylglucosamine transferase">
    <location>
        <begin position="1"/>
        <end position="356"/>
    </location>
</feature>
<feature type="binding site" evidence="1">
    <location>
        <position position="166"/>
    </location>
    <ligand>
        <name>UDP-N-acetyl-alpha-D-glucosamine</name>
        <dbReference type="ChEBI" id="CHEBI:57705"/>
    </ligand>
</feature>
<feature type="binding site" evidence="1">
    <location>
        <position position="196"/>
    </location>
    <ligand>
        <name>UDP-N-acetyl-alpha-D-glucosamine</name>
        <dbReference type="ChEBI" id="CHEBI:57705"/>
    </ligand>
</feature>
<feature type="binding site" evidence="1">
    <location>
        <position position="290"/>
    </location>
    <ligand>
        <name>UDP-N-acetyl-alpha-D-glucosamine</name>
        <dbReference type="ChEBI" id="CHEBI:57705"/>
    </ligand>
</feature>
<protein>
    <recommendedName>
        <fullName evidence="1">UDP-N-acetylglucosamine--N-acetylmuramyl-(pentapeptide) pyrophosphoryl-undecaprenol N-acetylglucosamine transferase</fullName>
        <ecNumber evidence="1">2.4.1.227</ecNumber>
    </recommendedName>
    <alternativeName>
        <fullName evidence="1">Undecaprenyl-PP-MurNAc-pentapeptide-UDPGlcNAc GlcNAc transferase</fullName>
    </alternativeName>
</protein>
<reference key="1">
    <citation type="journal article" date="2007" name="PLoS ONE">
        <title>Molecular correlates of host specialization in Staphylococcus aureus.</title>
        <authorList>
            <person name="Herron-Olson L."/>
            <person name="Fitzgerald J.R."/>
            <person name="Musser J.M."/>
            <person name="Kapur V."/>
        </authorList>
    </citation>
    <scope>NUCLEOTIDE SEQUENCE [LARGE SCALE GENOMIC DNA]</scope>
    <source>
        <strain>bovine RF122 / ET3-1</strain>
    </source>
</reference>
<name>MURG_STAAB</name>
<dbReference type="EC" id="2.4.1.227" evidence="1"/>
<dbReference type="EMBL" id="AJ938182">
    <property type="protein sequence ID" value="CAI80962.1"/>
    <property type="molecule type" value="Genomic_DNA"/>
</dbReference>
<dbReference type="RefSeq" id="WP_000160912.1">
    <property type="nucleotide sequence ID" value="NC_007622.1"/>
</dbReference>
<dbReference type="SMR" id="Q2YY01"/>
<dbReference type="CAZy" id="GT28">
    <property type="family name" value="Glycosyltransferase Family 28"/>
</dbReference>
<dbReference type="KEGG" id="sab:SAB1273c"/>
<dbReference type="HOGENOM" id="CLU_037404_0_0_9"/>
<dbReference type="UniPathway" id="UPA00219"/>
<dbReference type="GO" id="GO:0005886">
    <property type="term" value="C:plasma membrane"/>
    <property type="evidence" value="ECO:0007669"/>
    <property type="project" value="UniProtKB-SubCell"/>
</dbReference>
<dbReference type="GO" id="GO:0050511">
    <property type="term" value="F:undecaprenyldiphospho-muramoylpentapeptide beta-N-acetylglucosaminyltransferase activity"/>
    <property type="evidence" value="ECO:0007669"/>
    <property type="project" value="UniProtKB-UniRule"/>
</dbReference>
<dbReference type="GO" id="GO:0005975">
    <property type="term" value="P:carbohydrate metabolic process"/>
    <property type="evidence" value="ECO:0007669"/>
    <property type="project" value="InterPro"/>
</dbReference>
<dbReference type="GO" id="GO:0051301">
    <property type="term" value="P:cell division"/>
    <property type="evidence" value="ECO:0007669"/>
    <property type="project" value="UniProtKB-KW"/>
</dbReference>
<dbReference type="GO" id="GO:0071555">
    <property type="term" value="P:cell wall organization"/>
    <property type="evidence" value="ECO:0007669"/>
    <property type="project" value="UniProtKB-KW"/>
</dbReference>
<dbReference type="GO" id="GO:0030259">
    <property type="term" value="P:lipid glycosylation"/>
    <property type="evidence" value="ECO:0007669"/>
    <property type="project" value="UniProtKB-UniRule"/>
</dbReference>
<dbReference type="GO" id="GO:0009252">
    <property type="term" value="P:peptidoglycan biosynthetic process"/>
    <property type="evidence" value="ECO:0007669"/>
    <property type="project" value="UniProtKB-UniRule"/>
</dbReference>
<dbReference type="GO" id="GO:0008360">
    <property type="term" value="P:regulation of cell shape"/>
    <property type="evidence" value="ECO:0007669"/>
    <property type="project" value="UniProtKB-KW"/>
</dbReference>
<dbReference type="CDD" id="cd03785">
    <property type="entry name" value="GT28_MurG"/>
    <property type="match status" value="1"/>
</dbReference>
<dbReference type="Gene3D" id="3.40.50.2000">
    <property type="entry name" value="Glycogen Phosphorylase B"/>
    <property type="match status" value="2"/>
</dbReference>
<dbReference type="HAMAP" id="MF_00033">
    <property type="entry name" value="MurG"/>
    <property type="match status" value="1"/>
</dbReference>
<dbReference type="InterPro" id="IPR006009">
    <property type="entry name" value="GlcNAc_MurG"/>
</dbReference>
<dbReference type="InterPro" id="IPR007235">
    <property type="entry name" value="Glyco_trans_28_C"/>
</dbReference>
<dbReference type="InterPro" id="IPR004276">
    <property type="entry name" value="GlycoTrans_28_N"/>
</dbReference>
<dbReference type="NCBIfam" id="NF009102">
    <property type="entry name" value="PRK12446.1"/>
    <property type="match status" value="1"/>
</dbReference>
<dbReference type="PANTHER" id="PTHR21015:SF27">
    <property type="entry name" value="UDP-N-ACETYLGLUCOSAMINE--N-ACETYLMURAMYL-(PENTAPEPTIDE) PYROPHOSPHORYL-UNDECAPRENOL N-ACETYLGLUCOSAMINE TRANSFERASE"/>
    <property type="match status" value="1"/>
</dbReference>
<dbReference type="PANTHER" id="PTHR21015">
    <property type="entry name" value="UDP-N-ACETYLGLUCOSAMINE--N-ACETYLMURAMYL-(PENTAPEPTIDE) PYROPHOSPHORYL-UNDECAPRENOL N-ACETYLGLUCOSAMINE TRANSFERASE 1"/>
    <property type="match status" value="1"/>
</dbReference>
<dbReference type="Pfam" id="PF04101">
    <property type="entry name" value="Glyco_tran_28_C"/>
    <property type="match status" value="1"/>
</dbReference>
<dbReference type="Pfam" id="PF03033">
    <property type="entry name" value="Glyco_transf_28"/>
    <property type="match status" value="1"/>
</dbReference>
<dbReference type="SUPFAM" id="SSF53756">
    <property type="entry name" value="UDP-Glycosyltransferase/glycogen phosphorylase"/>
    <property type="match status" value="1"/>
</dbReference>
<accession>Q2YY01</accession>